<gene>
    <name evidence="1" type="primary">pepB</name>
    <name type="ordered locus">E2348C_2806</name>
</gene>
<evidence type="ECO:0000255" key="1">
    <source>
        <dbReference type="HAMAP-Rule" id="MF_00504"/>
    </source>
</evidence>
<name>PEPB_ECO27</name>
<keyword id="KW-0031">Aminopeptidase</keyword>
<keyword id="KW-0963">Cytoplasm</keyword>
<keyword id="KW-0378">Hydrolase</keyword>
<keyword id="KW-0464">Manganese</keyword>
<keyword id="KW-0479">Metal-binding</keyword>
<keyword id="KW-0645">Protease</keyword>
<keyword id="KW-1185">Reference proteome</keyword>
<feature type="chain" id="PRO_1000192730" description="Peptidase B">
    <location>
        <begin position="1"/>
        <end position="427"/>
    </location>
</feature>
<feature type="active site" evidence="1">
    <location>
        <position position="207"/>
    </location>
</feature>
<feature type="active site" evidence="1">
    <location>
        <position position="281"/>
    </location>
</feature>
<feature type="binding site" evidence="1">
    <location>
        <position position="195"/>
    </location>
    <ligand>
        <name>Mn(2+)</name>
        <dbReference type="ChEBI" id="CHEBI:29035"/>
        <label>2</label>
    </ligand>
</feature>
<feature type="binding site" evidence="1">
    <location>
        <position position="200"/>
    </location>
    <ligand>
        <name>Mn(2+)</name>
        <dbReference type="ChEBI" id="CHEBI:29035"/>
        <label>1</label>
    </ligand>
</feature>
<feature type="binding site" evidence="1">
    <location>
        <position position="200"/>
    </location>
    <ligand>
        <name>Mn(2+)</name>
        <dbReference type="ChEBI" id="CHEBI:29035"/>
        <label>2</label>
    </ligand>
</feature>
<feature type="binding site" evidence="1">
    <location>
        <position position="218"/>
    </location>
    <ligand>
        <name>Mn(2+)</name>
        <dbReference type="ChEBI" id="CHEBI:29035"/>
        <label>2</label>
    </ligand>
</feature>
<feature type="binding site" evidence="1">
    <location>
        <position position="277"/>
    </location>
    <ligand>
        <name>Mn(2+)</name>
        <dbReference type="ChEBI" id="CHEBI:29035"/>
        <label>1</label>
    </ligand>
</feature>
<feature type="binding site" evidence="1">
    <location>
        <position position="279"/>
    </location>
    <ligand>
        <name>Mn(2+)</name>
        <dbReference type="ChEBI" id="CHEBI:29035"/>
        <label>1</label>
    </ligand>
</feature>
<feature type="binding site" evidence="1">
    <location>
        <position position="279"/>
    </location>
    <ligand>
        <name>Mn(2+)</name>
        <dbReference type="ChEBI" id="CHEBI:29035"/>
        <label>2</label>
    </ligand>
</feature>
<protein>
    <recommendedName>
        <fullName evidence="1">Peptidase B</fullName>
        <ecNumber evidence="1">3.4.11.23</ecNumber>
    </recommendedName>
    <alternativeName>
        <fullName evidence="1">Aminopeptidase B</fullName>
    </alternativeName>
</protein>
<sequence>MTEAMKITLSPQPADARWGEKATYSINNDGITLHLNGADDLGLIQRAARKIDGLGIKHVQLSGEGWDADRCWAFWQGYKAPKGIRKVEWPDLDDAQRQELDNRLMIIDWVRDTINAPAEELGPSQLAQRAVDLISNVAGDRVTYRITKGEDLREQGYMGLHTVGRGSERSPVLLALDYNPTGDKEAPVYACLVGKGITFDSGGYSIKQTAFMDSMKSDMGGAATVTGALAFAITRGLNKRVKLFLCCADNLISGNAFKLGDIITYRNGKKVEVMNTDAEGRLVLADGLIDASAQKPELIIDAATLTGAAKTALGNDYHALFSFDDALAGRLLASAAQENEPFWRLPLAEFHRNQLPSNFAELNNTGSAAYPAGASTAAGFLSHFVENYQQGWLHIDCSATYRKAPVEQWSAGATGLGVRTIANLLTA</sequence>
<reference key="1">
    <citation type="journal article" date="2009" name="J. Bacteriol.">
        <title>Complete genome sequence and comparative genome analysis of enteropathogenic Escherichia coli O127:H6 strain E2348/69.</title>
        <authorList>
            <person name="Iguchi A."/>
            <person name="Thomson N.R."/>
            <person name="Ogura Y."/>
            <person name="Saunders D."/>
            <person name="Ooka T."/>
            <person name="Henderson I.R."/>
            <person name="Harris D."/>
            <person name="Asadulghani M."/>
            <person name="Kurokawa K."/>
            <person name="Dean P."/>
            <person name="Kenny B."/>
            <person name="Quail M.A."/>
            <person name="Thurston S."/>
            <person name="Dougan G."/>
            <person name="Hayashi T."/>
            <person name="Parkhill J."/>
            <person name="Frankel G."/>
        </authorList>
    </citation>
    <scope>NUCLEOTIDE SEQUENCE [LARGE SCALE GENOMIC DNA]</scope>
    <source>
        <strain>E2348/69 / EPEC</strain>
    </source>
</reference>
<proteinExistence type="inferred from homology"/>
<comment type="function">
    <text evidence="1">Probably plays an important role in intracellular peptide degradation.</text>
</comment>
<comment type="catalytic activity">
    <reaction evidence="1">
        <text>Release of an N-terminal amino acid, Xaa, from a peptide or arylamide. Xaa is preferably Glu or Asp but may be other amino acids, including Leu, Met, His, Cys and Gln.</text>
        <dbReference type="EC" id="3.4.11.23"/>
    </reaction>
</comment>
<comment type="cofactor">
    <cofactor evidence="1">
        <name>Mn(2+)</name>
        <dbReference type="ChEBI" id="CHEBI:29035"/>
    </cofactor>
    <text evidence="1">Binds 2 manganese ions per subunit.</text>
</comment>
<comment type="subunit">
    <text evidence="1">Homohexamer.</text>
</comment>
<comment type="subcellular location">
    <subcellularLocation>
        <location evidence="1">Cytoplasm</location>
    </subcellularLocation>
</comment>
<comment type="similarity">
    <text evidence="1">Belongs to the peptidase M17 family.</text>
</comment>
<organism>
    <name type="scientific">Escherichia coli O127:H6 (strain E2348/69 / EPEC)</name>
    <dbReference type="NCBI Taxonomy" id="574521"/>
    <lineage>
        <taxon>Bacteria</taxon>
        <taxon>Pseudomonadati</taxon>
        <taxon>Pseudomonadota</taxon>
        <taxon>Gammaproteobacteria</taxon>
        <taxon>Enterobacterales</taxon>
        <taxon>Enterobacteriaceae</taxon>
        <taxon>Escherichia</taxon>
    </lineage>
</organism>
<accession>B7UGW9</accession>
<dbReference type="EC" id="3.4.11.23" evidence="1"/>
<dbReference type="EMBL" id="FM180568">
    <property type="protein sequence ID" value="CAS10354.1"/>
    <property type="molecule type" value="Genomic_DNA"/>
</dbReference>
<dbReference type="RefSeq" id="WP_000133524.1">
    <property type="nucleotide sequence ID" value="NC_011601.1"/>
</dbReference>
<dbReference type="SMR" id="B7UGW9"/>
<dbReference type="MEROPS" id="M17.004"/>
<dbReference type="KEGG" id="ecg:E2348C_2806"/>
<dbReference type="HOGENOM" id="CLU_013734_7_1_6"/>
<dbReference type="Proteomes" id="UP000008205">
    <property type="component" value="Chromosome"/>
</dbReference>
<dbReference type="GO" id="GO:0005737">
    <property type="term" value="C:cytoplasm"/>
    <property type="evidence" value="ECO:0007669"/>
    <property type="project" value="UniProtKB-SubCell"/>
</dbReference>
<dbReference type="GO" id="GO:0030145">
    <property type="term" value="F:manganese ion binding"/>
    <property type="evidence" value="ECO:0007669"/>
    <property type="project" value="UniProtKB-UniRule"/>
</dbReference>
<dbReference type="GO" id="GO:0070006">
    <property type="term" value="F:metalloaminopeptidase activity"/>
    <property type="evidence" value="ECO:0007669"/>
    <property type="project" value="InterPro"/>
</dbReference>
<dbReference type="GO" id="GO:0006508">
    <property type="term" value="P:proteolysis"/>
    <property type="evidence" value="ECO:0007669"/>
    <property type="project" value="UniProtKB-UniRule"/>
</dbReference>
<dbReference type="CDD" id="cd00433">
    <property type="entry name" value="Peptidase_M17"/>
    <property type="match status" value="1"/>
</dbReference>
<dbReference type="FunFam" id="3.40.630.10:FF:000037">
    <property type="entry name" value="Peptidase B"/>
    <property type="match status" value="1"/>
</dbReference>
<dbReference type="Gene3D" id="3.40.630.10">
    <property type="entry name" value="Zn peptidases"/>
    <property type="match status" value="1"/>
</dbReference>
<dbReference type="HAMAP" id="MF_00504">
    <property type="entry name" value="Aminopeptidase_M17"/>
    <property type="match status" value="1"/>
</dbReference>
<dbReference type="InterPro" id="IPR011356">
    <property type="entry name" value="Leucine_aapep/pepB"/>
</dbReference>
<dbReference type="InterPro" id="IPR047620">
    <property type="entry name" value="M17_PepB-like_N"/>
</dbReference>
<dbReference type="InterPro" id="IPR008330">
    <property type="entry name" value="Pept_M17_PepB"/>
</dbReference>
<dbReference type="InterPro" id="IPR000819">
    <property type="entry name" value="Peptidase_M17_C"/>
</dbReference>
<dbReference type="NCBIfam" id="NF003450">
    <property type="entry name" value="PRK05015.1"/>
    <property type="match status" value="1"/>
</dbReference>
<dbReference type="PANTHER" id="PTHR11963">
    <property type="entry name" value="LEUCINE AMINOPEPTIDASE-RELATED"/>
    <property type="match status" value="1"/>
</dbReference>
<dbReference type="PANTHER" id="PTHR11963:SF20">
    <property type="entry name" value="PEPTIDASE B"/>
    <property type="match status" value="1"/>
</dbReference>
<dbReference type="Pfam" id="PF12404">
    <property type="entry name" value="DUF3663"/>
    <property type="match status" value="1"/>
</dbReference>
<dbReference type="Pfam" id="PF00883">
    <property type="entry name" value="Peptidase_M17"/>
    <property type="match status" value="1"/>
</dbReference>
<dbReference type="PIRSF" id="PIRSF036388">
    <property type="entry name" value="Ctsl_amnpptdse_B"/>
    <property type="match status" value="1"/>
</dbReference>
<dbReference type="PRINTS" id="PR00481">
    <property type="entry name" value="LAMNOPPTDASE"/>
</dbReference>
<dbReference type="SUPFAM" id="SSF53187">
    <property type="entry name" value="Zn-dependent exopeptidases"/>
    <property type="match status" value="1"/>
</dbReference>
<dbReference type="PROSITE" id="PS00631">
    <property type="entry name" value="CYTOSOL_AP"/>
    <property type="match status" value="1"/>
</dbReference>